<sequence>MNKVTKTAIAGLLALFAGNAAATDGEIVFDGEILKSACEINDSDKKIEVALGHYNAEQFRNIGERSPKIPFTIPLVNCPMTGWEHDNGNVEASFRLWLETRDNGTVPNFPNLAKVGSFAGIAATGVGIRIDDAESGNIMPLNAMGNDNTVYQIPAESNGIVNVDLIAYYVSTVVPSEITPGEADAIVNVTLDYR</sequence>
<proteinExistence type="evidence at transcript level"/>
<comment type="function">
    <text evidence="2">Part of the yraHIJK fimbrial operon. Could contribute to adhesion to various surfaces in specific environmental niches. Increases adhesion to eukaryotic T24 bladder epithelial cells in the absence of fim operon.</text>
</comment>
<comment type="subcellular location">
    <subcellularLocation>
        <location evidence="3">Fimbrium</location>
    </subcellularLocation>
</comment>
<comment type="induction">
    <text evidence="2">Expression is negatively regulated by H-NS and subjected to cAMP receptor protein (CRP)-mediated catabolite repression.</text>
</comment>
<comment type="disruption phenotype">
    <text evidence="2">Deletion of the operon under classical laboratory conditions does not result in any major effect on E.coli capacity to form biofilms compared with the wild-type strain.</text>
</comment>
<comment type="miscellaneous">
    <text evidence="4">The operon is cryptic under classical laboratory conditions, but is functional when constitutively expressed.</text>
</comment>
<comment type="similarity">
    <text evidence="3">Belongs to the fimbrial protein family.</text>
</comment>
<name>YRAH_ECOLI</name>
<keyword id="KW-1015">Disulfide bond</keyword>
<keyword id="KW-0281">Fimbrium</keyword>
<keyword id="KW-1185">Reference proteome</keyword>
<keyword id="KW-0732">Signal</keyword>
<protein>
    <recommendedName>
        <fullName>Uncharacterized fimbrial-like protein YraH</fullName>
    </recommendedName>
</protein>
<gene>
    <name type="primary">yraH</name>
    <name type="ordered locus">b3142</name>
    <name type="ordered locus">JW3111</name>
</gene>
<reference key="1">
    <citation type="journal article" date="1997" name="Science">
        <title>The complete genome sequence of Escherichia coli K-12.</title>
        <authorList>
            <person name="Blattner F.R."/>
            <person name="Plunkett G. III"/>
            <person name="Bloch C.A."/>
            <person name="Perna N.T."/>
            <person name="Burland V."/>
            <person name="Riley M."/>
            <person name="Collado-Vides J."/>
            <person name="Glasner J.D."/>
            <person name="Rode C.K."/>
            <person name="Mayhew G.F."/>
            <person name="Gregor J."/>
            <person name="Davis N.W."/>
            <person name="Kirkpatrick H.A."/>
            <person name="Goeden M.A."/>
            <person name="Rose D.J."/>
            <person name="Mau B."/>
            <person name="Shao Y."/>
        </authorList>
    </citation>
    <scope>NUCLEOTIDE SEQUENCE [LARGE SCALE GENOMIC DNA]</scope>
    <source>
        <strain>K12 / MG1655 / ATCC 47076</strain>
    </source>
</reference>
<reference key="2">
    <citation type="journal article" date="2006" name="Mol. Syst. Biol.">
        <title>Highly accurate genome sequences of Escherichia coli K-12 strains MG1655 and W3110.</title>
        <authorList>
            <person name="Hayashi K."/>
            <person name="Morooka N."/>
            <person name="Yamamoto Y."/>
            <person name="Fujita K."/>
            <person name="Isono K."/>
            <person name="Choi S."/>
            <person name="Ohtsubo E."/>
            <person name="Baba T."/>
            <person name="Wanner B.L."/>
            <person name="Mori H."/>
            <person name="Horiuchi T."/>
        </authorList>
    </citation>
    <scope>NUCLEOTIDE SEQUENCE [LARGE SCALE GENOMIC DNA]</scope>
    <source>
        <strain>K12 / W3110 / ATCC 27325 / DSM 5911</strain>
    </source>
</reference>
<reference key="3">
    <citation type="journal article" date="2010" name="Environ. Microbiol.">
        <title>Escherichia coli K-12 possesses multiple cryptic but functional chaperone-usher fimbriae with distinct surface specificities.</title>
        <authorList>
            <person name="Korea C.G."/>
            <person name="Badouraly R."/>
            <person name="Prevost M.C."/>
            <person name="Ghigo J.M."/>
            <person name="Beloin C."/>
        </authorList>
    </citation>
    <scope>FUNCTION</scope>
    <scope>INDUCTION</scope>
    <scope>DISRUPTION PHENOTYPE</scope>
    <source>
        <strain>K12 / MG1655 / ATCC 47076</strain>
    </source>
</reference>
<organism>
    <name type="scientific">Escherichia coli (strain K12)</name>
    <dbReference type="NCBI Taxonomy" id="83333"/>
    <lineage>
        <taxon>Bacteria</taxon>
        <taxon>Pseudomonadati</taxon>
        <taxon>Pseudomonadota</taxon>
        <taxon>Gammaproteobacteria</taxon>
        <taxon>Enterobacterales</taxon>
        <taxon>Enterobacteriaceae</taxon>
        <taxon>Escherichia</taxon>
    </lineage>
</organism>
<feature type="signal peptide" evidence="1">
    <location>
        <begin position="1"/>
        <end position="22"/>
    </location>
</feature>
<feature type="chain" id="PRO_0000009261" description="Uncharacterized fimbrial-like protein YraH">
    <location>
        <begin position="23"/>
        <end position="194"/>
    </location>
</feature>
<feature type="disulfide bond" evidence="1">
    <location>
        <begin position="38"/>
        <end position="78"/>
    </location>
</feature>
<dbReference type="EMBL" id="U18997">
    <property type="protein sequence ID" value="AAA57945.1"/>
    <property type="molecule type" value="Genomic_DNA"/>
</dbReference>
<dbReference type="EMBL" id="U00096">
    <property type="protein sequence ID" value="AAC76176.1"/>
    <property type="molecule type" value="Genomic_DNA"/>
</dbReference>
<dbReference type="EMBL" id="AP009048">
    <property type="protein sequence ID" value="BAE77188.1"/>
    <property type="molecule type" value="Genomic_DNA"/>
</dbReference>
<dbReference type="PIR" id="B65104">
    <property type="entry name" value="B65104"/>
</dbReference>
<dbReference type="RefSeq" id="NP_417611.1">
    <property type="nucleotide sequence ID" value="NC_000913.3"/>
</dbReference>
<dbReference type="RefSeq" id="WP_001045432.1">
    <property type="nucleotide sequence ID" value="NZ_LN832404.1"/>
</dbReference>
<dbReference type="SMR" id="P42913"/>
<dbReference type="BioGRID" id="4261995">
    <property type="interactions" value="13"/>
</dbReference>
<dbReference type="FunCoup" id="P42913">
    <property type="interactions" value="9"/>
</dbReference>
<dbReference type="STRING" id="511145.b3142"/>
<dbReference type="PaxDb" id="511145-b3142"/>
<dbReference type="EnsemblBacteria" id="AAC76176">
    <property type="protein sequence ID" value="AAC76176"/>
    <property type="gene ID" value="b3142"/>
</dbReference>
<dbReference type="GeneID" id="947658"/>
<dbReference type="KEGG" id="ecj:JW3111"/>
<dbReference type="KEGG" id="eco:b3142"/>
<dbReference type="KEGG" id="ecoc:C3026_17120"/>
<dbReference type="PATRIC" id="fig|1411691.4.peg.3588"/>
<dbReference type="EchoBASE" id="EB2626"/>
<dbReference type="eggNOG" id="COG3539">
    <property type="taxonomic scope" value="Bacteria"/>
</dbReference>
<dbReference type="HOGENOM" id="CLU_088965_0_3_6"/>
<dbReference type="InParanoid" id="P42913"/>
<dbReference type="OMA" id="QACEIDD"/>
<dbReference type="OrthoDB" id="6466381at2"/>
<dbReference type="PhylomeDB" id="P42913"/>
<dbReference type="BioCyc" id="EcoCyc:G7637-MONOMER"/>
<dbReference type="PRO" id="PR:P42913"/>
<dbReference type="Proteomes" id="UP000000625">
    <property type="component" value="Chromosome"/>
</dbReference>
<dbReference type="GO" id="GO:0009289">
    <property type="term" value="C:pilus"/>
    <property type="evidence" value="ECO:0000318"/>
    <property type="project" value="GO_Central"/>
</dbReference>
<dbReference type="GO" id="GO:0007155">
    <property type="term" value="P:cell adhesion"/>
    <property type="evidence" value="ECO:0000315"/>
    <property type="project" value="EcoCyc"/>
</dbReference>
<dbReference type="GO" id="GO:0043709">
    <property type="term" value="P:cell adhesion involved in single-species biofilm formation"/>
    <property type="evidence" value="ECO:0000318"/>
    <property type="project" value="GO_Central"/>
</dbReference>
<dbReference type="FunFam" id="2.60.40.1090:FF:000018">
    <property type="entry name" value="Fimbrial family protein"/>
    <property type="match status" value="1"/>
</dbReference>
<dbReference type="Gene3D" id="2.60.40.1090">
    <property type="entry name" value="Fimbrial-type adhesion domain"/>
    <property type="match status" value="1"/>
</dbReference>
<dbReference type="InterPro" id="IPR000259">
    <property type="entry name" value="Adhesion_dom_fimbrial"/>
</dbReference>
<dbReference type="InterPro" id="IPR036937">
    <property type="entry name" value="Adhesion_dom_fimbrial_sf"/>
</dbReference>
<dbReference type="InterPro" id="IPR008966">
    <property type="entry name" value="Adhesion_dom_sf"/>
</dbReference>
<dbReference type="InterPro" id="IPR050263">
    <property type="entry name" value="Bact_Fimbrial_Adh_Pro"/>
</dbReference>
<dbReference type="PANTHER" id="PTHR33420:SF26">
    <property type="entry name" value="FIMBRIAL SUBUNIT"/>
    <property type="match status" value="1"/>
</dbReference>
<dbReference type="PANTHER" id="PTHR33420">
    <property type="entry name" value="FIMBRIAL SUBUNIT ELFA-RELATED"/>
    <property type="match status" value="1"/>
</dbReference>
<dbReference type="Pfam" id="PF00419">
    <property type="entry name" value="Fimbrial"/>
    <property type="match status" value="1"/>
</dbReference>
<dbReference type="SUPFAM" id="SSF49401">
    <property type="entry name" value="Bacterial adhesins"/>
    <property type="match status" value="1"/>
</dbReference>
<evidence type="ECO:0000255" key="1"/>
<evidence type="ECO:0000269" key="2">
    <source>
    </source>
</evidence>
<evidence type="ECO:0000305" key="3"/>
<evidence type="ECO:0000305" key="4">
    <source>
    </source>
</evidence>
<accession>P42913</accession>
<accession>Q2M968</accession>